<name>LSPA_PSEA6</name>
<comment type="function">
    <text evidence="1">This protein specifically catalyzes the removal of signal peptides from prolipoproteins.</text>
</comment>
<comment type="catalytic activity">
    <reaction evidence="1">
        <text>Release of signal peptides from bacterial membrane prolipoproteins. Hydrolyzes -Xaa-Yaa-Zaa-|-(S,diacylglyceryl)Cys-, in which Xaa is hydrophobic (preferably Leu), and Yaa (Ala or Ser) and Zaa (Gly or Ala) have small, neutral side chains.</text>
        <dbReference type="EC" id="3.4.23.36"/>
    </reaction>
</comment>
<comment type="pathway">
    <text evidence="1">Protein modification; lipoprotein biosynthesis (signal peptide cleavage).</text>
</comment>
<comment type="subcellular location">
    <subcellularLocation>
        <location evidence="1">Cell inner membrane</location>
        <topology evidence="1">Multi-pass membrane protein</topology>
    </subcellularLocation>
</comment>
<comment type="similarity">
    <text evidence="1">Belongs to the peptidase A8 family.</text>
</comment>
<evidence type="ECO:0000255" key="1">
    <source>
        <dbReference type="HAMAP-Rule" id="MF_00161"/>
    </source>
</evidence>
<keyword id="KW-0064">Aspartyl protease</keyword>
<keyword id="KW-0997">Cell inner membrane</keyword>
<keyword id="KW-1003">Cell membrane</keyword>
<keyword id="KW-0378">Hydrolase</keyword>
<keyword id="KW-0472">Membrane</keyword>
<keyword id="KW-0645">Protease</keyword>
<keyword id="KW-0812">Transmembrane</keyword>
<keyword id="KW-1133">Transmembrane helix</keyword>
<reference key="1">
    <citation type="submission" date="2006-06" db="EMBL/GenBank/DDBJ databases">
        <title>Complete sequence of Pseudoalteromonas atlantica T6c.</title>
        <authorList>
            <consortium name="US DOE Joint Genome Institute"/>
            <person name="Copeland A."/>
            <person name="Lucas S."/>
            <person name="Lapidus A."/>
            <person name="Barry K."/>
            <person name="Detter J.C."/>
            <person name="Glavina del Rio T."/>
            <person name="Hammon N."/>
            <person name="Israni S."/>
            <person name="Dalin E."/>
            <person name="Tice H."/>
            <person name="Pitluck S."/>
            <person name="Saunders E."/>
            <person name="Brettin T."/>
            <person name="Bruce D."/>
            <person name="Han C."/>
            <person name="Tapia R."/>
            <person name="Gilna P."/>
            <person name="Schmutz J."/>
            <person name="Larimer F."/>
            <person name="Land M."/>
            <person name="Hauser L."/>
            <person name="Kyrpides N."/>
            <person name="Kim E."/>
            <person name="Karls A.C."/>
            <person name="Bartlett D."/>
            <person name="Higgins B.P."/>
            <person name="Richardson P."/>
        </authorList>
    </citation>
    <scope>NUCLEOTIDE SEQUENCE [LARGE SCALE GENOMIC DNA]</scope>
    <source>
        <strain>T6c / ATCC BAA-1087</strain>
    </source>
</reference>
<sequence length="164" mass="18876">MLNLFRQSGLRFLWLAVVVFVIDQVTKHWIVANLEPYQAIQYTSFFNLTHVYNYGAAFSFLSDAGGWQRWLFTGIAIAVCGLVTWWLKETTRQQVMLPVAFCLIIGGALGNVFDRLLHGFVIDFLVLYYQDWYWPAFNVADSAICLGAFLLVIDMFKNKDNVNE</sequence>
<gene>
    <name evidence="1" type="primary">lspA</name>
    <name type="ordered locus">Patl_3177</name>
</gene>
<dbReference type="EC" id="3.4.23.36" evidence="1"/>
<dbReference type="EMBL" id="CP000388">
    <property type="protein sequence ID" value="ABG41683.1"/>
    <property type="molecule type" value="Genomic_DNA"/>
</dbReference>
<dbReference type="RefSeq" id="WP_006993162.1">
    <property type="nucleotide sequence ID" value="NC_008228.1"/>
</dbReference>
<dbReference type="SMR" id="Q15R05"/>
<dbReference type="STRING" id="342610.Patl_3177"/>
<dbReference type="KEGG" id="pat:Patl_3177"/>
<dbReference type="eggNOG" id="COG0597">
    <property type="taxonomic scope" value="Bacteria"/>
</dbReference>
<dbReference type="HOGENOM" id="CLU_083252_4_0_6"/>
<dbReference type="OrthoDB" id="9810259at2"/>
<dbReference type="UniPathway" id="UPA00665"/>
<dbReference type="Proteomes" id="UP000001981">
    <property type="component" value="Chromosome"/>
</dbReference>
<dbReference type="GO" id="GO:0005886">
    <property type="term" value="C:plasma membrane"/>
    <property type="evidence" value="ECO:0007669"/>
    <property type="project" value="UniProtKB-SubCell"/>
</dbReference>
<dbReference type="GO" id="GO:0004190">
    <property type="term" value="F:aspartic-type endopeptidase activity"/>
    <property type="evidence" value="ECO:0007669"/>
    <property type="project" value="UniProtKB-UniRule"/>
</dbReference>
<dbReference type="GO" id="GO:0006508">
    <property type="term" value="P:proteolysis"/>
    <property type="evidence" value="ECO:0007669"/>
    <property type="project" value="UniProtKB-KW"/>
</dbReference>
<dbReference type="HAMAP" id="MF_00161">
    <property type="entry name" value="LspA"/>
    <property type="match status" value="1"/>
</dbReference>
<dbReference type="InterPro" id="IPR001872">
    <property type="entry name" value="Peptidase_A8"/>
</dbReference>
<dbReference type="NCBIfam" id="TIGR00077">
    <property type="entry name" value="lspA"/>
    <property type="match status" value="1"/>
</dbReference>
<dbReference type="PANTHER" id="PTHR33695">
    <property type="entry name" value="LIPOPROTEIN SIGNAL PEPTIDASE"/>
    <property type="match status" value="1"/>
</dbReference>
<dbReference type="PANTHER" id="PTHR33695:SF1">
    <property type="entry name" value="LIPOPROTEIN SIGNAL PEPTIDASE"/>
    <property type="match status" value="1"/>
</dbReference>
<dbReference type="Pfam" id="PF01252">
    <property type="entry name" value="Peptidase_A8"/>
    <property type="match status" value="1"/>
</dbReference>
<dbReference type="PRINTS" id="PR00781">
    <property type="entry name" value="LIPOSIGPTASE"/>
</dbReference>
<dbReference type="PROSITE" id="PS00855">
    <property type="entry name" value="SPASE_II"/>
    <property type="match status" value="1"/>
</dbReference>
<organism>
    <name type="scientific">Pseudoalteromonas atlantica (strain T6c / ATCC BAA-1087)</name>
    <dbReference type="NCBI Taxonomy" id="3042615"/>
    <lineage>
        <taxon>Bacteria</taxon>
        <taxon>Pseudomonadati</taxon>
        <taxon>Pseudomonadota</taxon>
        <taxon>Gammaproteobacteria</taxon>
        <taxon>Alteromonadales</taxon>
        <taxon>Alteromonadaceae</taxon>
        <taxon>Paraglaciecola</taxon>
    </lineage>
</organism>
<protein>
    <recommendedName>
        <fullName evidence="1">Lipoprotein signal peptidase</fullName>
        <ecNumber evidence="1">3.4.23.36</ecNumber>
    </recommendedName>
    <alternativeName>
        <fullName evidence="1">Prolipoprotein signal peptidase</fullName>
    </alternativeName>
    <alternativeName>
        <fullName evidence="1">Signal peptidase II</fullName>
        <shortName evidence="1">SPase II</shortName>
    </alternativeName>
</protein>
<accession>Q15R05</accession>
<feature type="chain" id="PRO_1000038813" description="Lipoprotein signal peptidase">
    <location>
        <begin position="1"/>
        <end position="164"/>
    </location>
</feature>
<feature type="transmembrane region" description="Helical" evidence="1">
    <location>
        <begin position="12"/>
        <end position="32"/>
    </location>
</feature>
<feature type="transmembrane region" description="Helical" evidence="1">
    <location>
        <begin position="70"/>
        <end position="90"/>
    </location>
</feature>
<feature type="transmembrane region" description="Helical" evidence="1">
    <location>
        <begin position="93"/>
        <end position="113"/>
    </location>
</feature>
<feature type="transmembrane region" description="Helical" evidence="1">
    <location>
        <begin position="133"/>
        <end position="153"/>
    </location>
</feature>
<feature type="active site" evidence="1">
    <location>
        <position position="123"/>
    </location>
</feature>
<feature type="active site" evidence="1">
    <location>
        <position position="141"/>
    </location>
</feature>
<proteinExistence type="inferred from homology"/>